<evidence type="ECO:0000250" key="1"/>
<evidence type="ECO:0000255" key="2"/>
<evidence type="ECO:0000305" key="3"/>
<protein>
    <recommendedName>
        <fullName>Flagellar biosynthetic protein FliQ</fullName>
    </recommendedName>
</protein>
<name>FLIQ_ECOLI</name>
<keyword id="KW-0975">Bacterial flagellum</keyword>
<keyword id="KW-0997">Cell inner membrane</keyword>
<keyword id="KW-1003">Cell membrane</keyword>
<keyword id="KW-0472">Membrane</keyword>
<keyword id="KW-1185">Reference proteome</keyword>
<keyword id="KW-0812">Transmembrane</keyword>
<keyword id="KW-1133">Transmembrane helix</keyword>
<accession>P0AC07</accession>
<accession>P33134</accession>
<dbReference type="EMBL" id="L22182">
    <property type="protein sequence ID" value="AAC36860.1"/>
    <property type="molecule type" value="Genomic_DNA"/>
</dbReference>
<dbReference type="EMBL" id="AP009048">
    <property type="protein sequence ID" value="BAA15774.1"/>
    <property type="molecule type" value="Genomic_DNA"/>
</dbReference>
<dbReference type="EMBL" id="U00096">
    <property type="protein sequence ID" value="AAC75016.1"/>
    <property type="molecule type" value="Genomic_DNA"/>
</dbReference>
<dbReference type="PIR" id="C36869">
    <property type="entry name" value="C36869"/>
</dbReference>
<dbReference type="RefSeq" id="NP_416459.1">
    <property type="nucleotide sequence ID" value="NC_000913.3"/>
</dbReference>
<dbReference type="RefSeq" id="WP_000187358.1">
    <property type="nucleotide sequence ID" value="NZ_SSZK01000066.1"/>
</dbReference>
<dbReference type="SMR" id="P0AC07"/>
<dbReference type="BioGRID" id="4261045">
    <property type="interactions" value="5"/>
</dbReference>
<dbReference type="ComplexPortal" id="CPX-5885">
    <property type="entry name" value="Flagellar export complex"/>
</dbReference>
<dbReference type="FunCoup" id="P0AC07">
    <property type="interactions" value="109"/>
</dbReference>
<dbReference type="IntAct" id="P0AC07">
    <property type="interactions" value="1"/>
</dbReference>
<dbReference type="STRING" id="511145.b1949"/>
<dbReference type="PaxDb" id="511145-b1949"/>
<dbReference type="EnsemblBacteria" id="AAC75016">
    <property type="protein sequence ID" value="AAC75016"/>
    <property type="gene ID" value="b1949"/>
</dbReference>
<dbReference type="GeneID" id="93775236"/>
<dbReference type="GeneID" id="946463"/>
<dbReference type="KEGG" id="ecj:JW1933"/>
<dbReference type="KEGG" id="eco:b1949"/>
<dbReference type="KEGG" id="ecoc:C3026_11035"/>
<dbReference type="PATRIC" id="fig|1411691.4.peg.302"/>
<dbReference type="EchoBASE" id="EB1919"/>
<dbReference type="eggNOG" id="COG1987">
    <property type="taxonomic scope" value="Bacteria"/>
</dbReference>
<dbReference type="HOGENOM" id="CLU_164516_2_0_6"/>
<dbReference type="InParanoid" id="P0AC07"/>
<dbReference type="OMA" id="EFTRYLW"/>
<dbReference type="PhylomeDB" id="P0AC07"/>
<dbReference type="BioCyc" id="EcoCyc:EG11976-MONOMER"/>
<dbReference type="PRO" id="PR:P0AC07"/>
<dbReference type="Proteomes" id="UP000000625">
    <property type="component" value="Chromosome"/>
</dbReference>
<dbReference type="GO" id="GO:0009288">
    <property type="term" value="C:bacterial-type flagellum"/>
    <property type="evidence" value="ECO:0000303"/>
    <property type="project" value="ComplexPortal"/>
</dbReference>
<dbReference type="GO" id="GO:0120102">
    <property type="term" value="C:bacterial-type flagellum secretion apparatus"/>
    <property type="evidence" value="ECO:0000303"/>
    <property type="project" value="ComplexPortal"/>
</dbReference>
<dbReference type="GO" id="GO:0005886">
    <property type="term" value="C:plasma membrane"/>
    <property type="evidence" value="ECO:0007669"/>
    <property type="project" value="UniProtKB-SubCell"/>
</dbReference>
<dbReference type="GO" id="GO:0030257">
    <property type="term" value="C:type III protein secretion system complex"/>
    <property type="evidence" value="ECO:0000303"/>
    <property type="project" value="ComplexPortal"/>
</dbReference>
<dbReference type="GO" id="GO:0044780">
    <property type="term" value="P:bacterial-type flagellum assembly"/>
    <property type="evidence" value="ECO:0000318"/>
    <property type="project" value="GO_Central"/>
</dbReference>
<dbReference type="GO" id="GO:0071973">
    <property type="term" value="P:bacterial-type flagellum-dependent cell motility"/>
    <property type="evidence" value="ECO:0000303"/>
    <property type="project" value="ComplexPortal"/>
</dbReference>
<dbReference type="GO" id="GO:0006935">
    <property type="term" value="P:chemotaxis"/>
    <property type="evidence" value="ECO:0000303"/>
    <property type="project" value="ComplexPortal"/>
</dbReference>
<dbReference type="GO" id="GO:0030254">
    <property type="term" value="P:protein secretion by the type III secretion system"/>
    <property type="evidence" value="ECO:0000303"/>
    <property type="project" value="ComplexPortal"/>
</dbReference>
<dbReference type="InterPro" id="IPR002191">
    <property type="entry name" value="Bac_export_3"/>
</dbReference>
<dbReference type="InterPro" id="IPR006305">
    <property type="entry name" value="FliQ"/>
</dbReference>
<dbReference type="NCBIfam" id="TIGR01402">
    <property type="entry name" value="fliQ"/>
    <property type="match status" value="1"/>
</dbReference>
<dbReference type="PANTHER" id="PTHR34040">
    <property type="entry name" value="FLAGELLAR BIOSYNTHETIC PROTEIN FLIQ"/>
    <property type="match status" value="1"/>
</dbReference>
<dbReference type="PANTHER" id="PTHR34040:SF2">
    <property type="entry name" value="FLAGELLAR BIOSYNTHETIC PROTEIN FLIQ"/>
    <property type="match status" value="1"/>
</dbReference>
<dbReference type="Pfam" id="PF01313">
    <property type="entry name" value="Bac_export_3"/>
    <property type="match status" value="1"/>
</dbReference>
<dbReference type="PIRSF" id="PIRSF004669">
    <property type="entry name" value="FliQ"/>
    <property type="match status" value="1"/>
</dbReference>
<dbReference type="PRINTS" id="PR00952">
    <property type="entry name" value="TYPE3IMQPROT"/>
</dbReference>
<organism>
    <name type="scientific">Escherichia coli (strain K12)</name>
    <dbReference type="NCBI Taxonomy" id="83333"/>
    <lineage>
        <taxon>Bacteria</taxon>
        <taxon>Pseudomonadati</taxon>
        <taxon>Pseudomonadota</taxon>
        <taxon>Gammaproteobacteria</taxon>
        <taxon>Enterobacterales</taxon>
        <taxon>Enterobacteriaceae</taxon>
        <taxon>Escherichia</taxon>
    </lineage>
</organism>
<sequence>MTPESVMMMGTEAMKVALALAAPLLLVALVTGLIISILQAATQINEMTLSFIPKIIAVFIAIIIAGPWMLNLLLDYVRTLFTNLPYIIG</sequence>
<gene>
    <name type="primary">fliQ</name>
    <name type="synonym">flaQ</name>
    <name type="ordered locus">b1949</name>
    <name type="ordered locus">JW1933</name>
</gene>
<comment type="function">
    <text>Required for the assembly of the rivet at the earliest stage of flagellar biosynthesis.</text>
</comment>
<comment type="subcellular location">
    <subcellularLocation>
        <location evidence="3">Cell inner membrane</location>
        <topology evidence="3">Multi-pass membrane protein</topology>
    </subcellularLocation>
    <subcellularLocation>
        <location evidence="1">Bacterial flagellum basal body</location>
    </subcellularLocation>
</comment>
<comment type="similarity">
    <text evidence="3">Belongs to the FliQ/MopD/SpaQ family.</text>
</comment>
<proteinExistence type="inferred from homology"/>
<reference key="1">
    <citation type="journal article" date="1994" name="J. Bacteriol.">
        <title>Molecular characterization, nucleotide sequence, and expression of the fliO, fliP, fliQ, and fliR genes of Escherichia coli.</title>
        <authorList>
            <person name="Malakooti J."/>
            <person name="Ely B."/>
            <person name="Matsumura P."/>
        </authorList>
    </citation>
    <scope>NUCLEOTIDE SEQUENCE [GENOMIC DNA]</scope>
    <source>
        <strain>K12</strain>
    </source>
</reference>
<reference key="2">
    <citation type="journal article" date="1996" name="DNA Res.">
        <title>A 460-kb DNA sequence of the Escherichia coli K-12 genome corresponding to the 40.1-50.0 min region on the linkage map.</title>
        <authorList>
            <person name="Itoh T."/>
            <person name="Aiba H."/>
            <person name="Baba T."/>
            <person name="Fujita K."/>
            <person name="Hayashi K."/>
            <person name="Inada T."/>
            <person name="Isono K."/>
            <person name="Kasai H."/>
            <person name="Kimura S."/>
            <person name="Kitakawa M."/>
            <person name="Kitagawa M."/>
            <person name="Makino K."/>
            <person name="Miki T."/>
            <person name="Mizobuchi K."/>
            <person name="Mori H."/>
            <person name="Mori T."/>
            <person name="Motomura K."/>
            <person name="Nakade S."/>
            <person name="Nakamura Y."/>
            <person name="Nashimoto H."/>
            <person name="Nishio Y."/>
            <person name="Oshima T."/>
            <person name="Saito N."/>
            <person name="Sampei G."/>
            <person name="Seki Y."/>
            <person name="Sivasundaram S."/>
            <person name="Tagami H."/>
            <person name="Takeda J."/>
            <person name="Takemoto K."/>
            <person name="Wada C."/>
            <person name="Yamamoto Y."/>
            <person name="Horiuchi T."/>
        </authorList>
    </citation>
    <scope>NUCLEOTIDE SEQUENCE [LARGE SCALE GENOMIC DNA]</scope>
    <source>
        <strain>K12 / W3110 / ATCC 27325 / DSM 5911</strain>
    </source>
</reference>
<reference key="3">
    <citation type="journal article" date="1997" name="Science">
        <title>The complete genome sequence of Escherichia coli K-12.</title>
        <authorList>
            <person name="Blattner F.R."/>
            <person name="Plunkett G. III"/>
            <person name="Bloch C.A."/>
            <person name="Perna N.T."/>
            <person name="Burland V."/>
            <person name="Riley M."/>
            <person name="Collado-Vides J."/>
            <person name="Glasner J.D."/>
            <person name="Rode C.K."/>
            <person name="Mayhew G.F."/>
            <person name="Gregor J."/>
            <person name="Davis N.W."/>
            <person name="Kirkpatrick H.A."/>
            <person name="Goeden M.A."/>
            <person name="Rose D.J."/>
            <person name="Mau B."/>
            <person name="Shao Y."/>
        </authorList>
    </citation>
    <scope>NUCLEOTIDE SEQUENCE [LARGE SCALE GENOMIC DNA]</scope>
    <source>
        <strain>K12 / MG1655 / ATCC 47076</strain>
    </source>
</reference>
<reference key="4">
    <citation type="journal article" date="2006" name="Mol. Syst. Biol.">
        <title>Highly accurate genome sequences of Escherichia coli K-12 strains MG1655 and W3110.</title>
        <authorList>
            <person name="Hayashi K."/>
            <person name="Morooka N."/>
            <person name="Yamamoto Y."/>
            <person name="Fujita K."/>
            <person name="Isono K."/>
            <person name="Choi S."/>
            <person name="Ohtsubo E."/>
            <person name="Baba T."/>
            <person name="Wanner B.L."/>
            <person name="Mori H."/>
            <person name="Horiuchi T."/>
        </authorList>
    </citation>
    <scope>NUCLEOTIDE SEQUENCE [LARGE SCALE GENOMIC DNA]</scope>
    <source>
        <strain>K12 / W3110 / ATCC 27325 / DSM 5911</strain>
    </source>
</reference>
<feature type="chain" id="PRO_0000129093" description="Flagellar biosynthetic protein FliQ">
    <location>
        <begin position="1"/>
        <end position="89"/>
    </location>
</feature>
<feature type="transmembrane region" description="Helical" evidence="2">
    <location>
        <begin position="16"/>
        <end position="40"/>
    </location>
</feature>
<feature type="transmembrane region" description="Helical" evidence="2">
    <location>
        <begin position="55"/>
        <end position="75"/>
    </location>
</feature>